<protein>
    <recommendedName>
        <fullName>Cytochrome b</fullName>
    </recommendedName>
    <alternativeName>
        <fullName>Complex III subunit 3</fullName>
    </alternativeName>
    <alternativeName>
        <fullName>Complex III subunit III</fullName>
    </alternativeName>
    <alternativeName>
        <fullName>Cytochrome b-c1 complex subunit 3</fullName>
    </alternativeName>
    <alternativeName>
        <fullName>Ubiquinol-cytochrome-c reductase complex cytochrome b subunit</fullName>
    </alternativeName>
</protein>
<evidence type="ECO:0000250" key="1"/>
<evidence type="ECO:0000250" key="2">
    <source>
        <dbReference type="UniProtKB" id="P00157"/>
    </source>
</evidence>
<evidence type="ECO:0000255" key="3">
    <source>
        <dbReference type="PROSITE-ProRule" id="PRU00967"/>
    </source>
</evidence>
<evidence type="ECO:0000255" key="4">
    <source>
        <dbReference type="PROSITE-ProRule" id="PRU00968"/>
    </source>
</evidence>
<reference key="1">
    <citation type="journal article" date="1998" name="J. Mammal.">
        <title>Phylogeny of the dasyurid marsupial genus Antechinus based on cytochrome b, 12S rRNA, and protamine P1 genes.</title>
        <authorList>
            <person name="Armstrong L.A."/>
            <person name="Krajewski C."/>
            <person name="Westerman M."/>
        </authorList>
    </citation>
    <scope>NUCLEOTIDE SEQUENCE [GENOMIC DNA]</scope>
</reference>
<organism>
    <name type="scientific">Murexia naso</name>
    <name type="common">Long-nosed marsupial mouse</name>
    <name type="synonym">Antechinus naso</name>
    <dbReference type="NCBI Taxonomy" id="418659"/>
    <lineage>
        <taxon>Eukaryota</taxon>
        <taxon>Metazoa</taxon>
        <taxon>Chordata</taxon>
        <taxon>Craniata</taxon>
        <taxon>Vertebrata</taxon>
        <taxon>Euteleostomi</taxon>
        <taxon>Mammalia</taxon>
        <taxon>Metatheria</taxon>
        <taxon>Dasyuromorphia</taxon>
        <taxon>Dasyuridae</taxon>
        <taxon>Murexia</taxon>
    </lineage>
</organism>
<dbReference type="EMBL" id="U23461">
    <property type="protein sequence ID" value="AAB91425.1"/>
    <property type="molecule type" value="Genomic_DNA"/>
</dbReference>
<dbReference type="SMR" id="Q33800"/>
<dbReference type="GO" id="GO:0005743">
    <property type="term" value="C:mitochondrial inner membrane"/>
    <property type="evidence" value="ECO:0007669"/>
    <property type="project" value="UniProtKB-SubCell"/>
</dbReference>
<dbReference type="GO" id="GO:0045275">
    <property type="term" value="C:respiratory chain complex III"/>
    <property type="evidence" value="ECO:0007669"/>
    <property type="project" value="InterPro"/>
</dbReference>
<dbReference type="GO" id="GO:0046872">
    <property type="term" value="F:metal ion binding"/>
    <property type="evidence" value="ECO:0007669"/>
    <property type="project" value="UniProtKB-KW"/>
</dbReference>
<dbReference type="GO" id="GO:0008121">
    <property type="term" value="F:ubiquinol-cytochrome-c reductase activity"/>
    <property type="evidence" value="ECO:0007669"/>
    <property type="project" value="InterPro"/>
</dbReference>
<dbReference type="GO" id="GO:0006122">
    <property type="term" value="P:mitochondrial electron transport, ubiquinol to cytochrome c"/>
    <property type="evidence" value="ECO:0007669"/>
    <property type="project" value="TreeGrafter"/>
</dbReference>
<dbReference type="CDD" id="cd00290">
    <property type="entry name" value="cytochrome_b_C"/>
    <property type="match status" value="1"/>
</dbReference>
<dbReference type="CDD" id="cd00284">
    <property type="entry name" value="Cytochrome_b_N"/>
    <property type="match status" value="1"/>
</dbReference>
<dbReference type="FunFam" id="1.20.810.10:FF:000002">
    <property type="entry name" value="Cytochrome b"/>
    <property type="match status" value="1"/>
</dbReference>
<dbReference type="Gene3D" id="1.20.810.10">
    <property type="entry name" value="Cytochrome Bc1 Complex, Chain C"/>
    <property type="match status" value="1"/>
</dbReference>
<dbReference type="InterPro" id="IPR005798">
    <property type="entry name" value="Cyt_b/b6_C"/>
</dbReference>
<dbReference type="InterPro" id="IPR036150">
    <property type="entry name" value="Cyt_b/b6_C_sf"/>
</dbReference>
<dbReference type="InterPro" id="IPR005797">
    <property type="entry name" value="Cyt_b/b6_N"/>
</dbReference>
<dbReference type="InterPro" id="IPR027387">
    <property type="entry name" value="Cytb/b6-like_sf"/>
</dbReference>
<dbReference type="InterPro" id="IPR030689">
    <property type="entry name" value="Cytochrome_b"/>
</dbReference>
<dbReference type="InterPro" id="IPR048260">
    <property type="entry name" value="Cytochrome_b_C_euk/bac"/>
</dbReference>
<dbReference type="InterPro" id="IPR048259">
    <property type="entry name" value="Cytochrome_b_N_euk/bac"/>
</dbReference>
<dbReference type="InterPro" id="IPR016174">
    <property type="entry name" value="Di-haem_cyt_TM"/>
</dbReference>
<dbReference type="PANTHER" id="PTHR19271">
    <property type="entry name" value="CYTOCHROME B"/>
    <property type="match status" value="1"/>
</dbReference>
<dbReference type="PANTHER" id="PTHR19271:SF16">
    <property type="entry name" value="CYTOCHROME B"/>
    <property type="match status" value="1"/>
</dbReference>
<dbReference type="Pfam" id="PF00032">
    <property type="entry name" value="Cytochrom_B_C"/>
    <property type="match status" value="1"/>
</dbReference>
<dbReference type="Pfam" id="PF00033">
    <property type="entry name" value="Cytochrome_B"/>
    <property type="match status" value="1"/>
</dbReference>
<dbReference type="PIRSF" id="PIRSF038885">
    <property type="entry name" value="COB"/>
    <property type="match status" value="1"/>
</dbReference>
<dbReference type="SUPFAM" id="SSF81648">
    <property type="entry name" value="a domain/subunit of cytochrome bc1 complex (Ubiquinol-cytochrome c reductase)"/>
    <property type="match status" value="1"/>
</dbReference>
<dbReference type="SUPFAM" id="SSF81342">
    <property type="entry name" value="Transmembrane di-heme cytochromes"/>
    <property type="match status" value="1"/>
</dbReference>
<dbReference type="PROSITE" id="PS51003">
    <property type="entry name" value="CYTB_CTER"/>
    <property type="match status" value="1"/>
</dbReference>
<dbReference type="PROSITE" id="PS51002">
    <property type="entry name" value="CYTB_NTER"/>
    <property type="match status" value="1"/>
</dbReference>
<gene>
    <name type="primary">MT-CYB</name>
    <name type="synonym">COB</name>
    <name type="synonym">CYTB</name>
    <name type="synonym">MTCYB</name>
</gene>
<geneLocation type="mitochondrion"/>
<sequence>MINLRKTHPLMKIINHSFIDLPAPSNISAWWNFGSLLGACLIIQILTGFFLAMHYTSDTLTAFSSVAHICRDVNYGWLIRNLHANGASMFFMCLFLHIGRGIYYGSYLYKETWNIGVILLLTVMATAFVGYVLPWGQMSFWGTTVITNLLSAIPYIGTTLAEWIWGGFAVDKATLTRFFAFHFILPFIIMALAMVHLLFLHETGSNNPTGINPDSDKIPFHPYYTIKDALGMTLLLLVLLLLALFSPDSLGDPDNFSPANPLNTPPHIKPEWYFLFAYAILRSIPNKLGGVLALLASILILLIMPLLHTANQRSMMFRPVSQTLFWILAADLITLTWVGGQPVEQPYIIIGQLASMLYFLLILILMPLAGMFENYMLKPKW</sequence>
<feature type="chain" id="PRO_0000060599" description="Cytochrome b">
    <location>
        <begin position="1"/>
        <end position="381"/>
    </location>
</feature>
<feature type="transmembrane region" description="Helical" evidence="2">
    <location>
        <begin position="33"/>
        <end position="53"/>
    </location>
</feature>
<feature type="transmembrane region" description="Helical" evidence="2">
    <location>
        <begin position="77"/>
        <end position="98"/>
    </location>
</feature>
<feature type="transmembrane region" description="Helical" evidence="2">
    <location>
        <begin position="113"/>
        <end position="133"/>
    </location>
</feature>
<feature type="transmembrane region" description="Helical" evidence="2">
    <location>
        <begin position="178"/>
        <end position="198"/>
    </location>
</feature>
<feature type="transmembrane region" description="Helical" evidence="2">
    <location>
        <begin position="226"/>
        <end position="246"/>
    </location>
</feature>
<feature type="transmembrane region" description="Helical" evidence="2">
    <location>
        <begin position="288"/>
        <end position="308"/>
    </location>
</feature>
<feature type="transmembrane region" description="Helical" evidence="2">
    <location>
        <begin position="320"/>
        <end position="340"/>
    </location>
</feature>
<feature type="transmembrane region" description="Helical" evidence="2">
    <location>
        <begin position="347"/>
        <end position="367"/>
    </location>
</feature>
<feature type="binding site" description="axial binding residue" evidence="2">
    <location>
        <position position="83"/>
    </location>
    <ligand>
        <name>heme b</name>
        <dbReference type="ChEBI" id="CHEBI:60344"/>
        <label>b562</label>
    </ligand>
    <ligandPart>
        <name>Fe</name>
        <dbReference type="ChEBI" id="CHEBI:18248"/>
    </ligandPart>
</feature>
<feature type="binding site" description="axial binding residue" evidence="2">
    <location>
        <position position="97"/>
    </location>
    <ligand>
        <name>heme b</name>
        <dbReference type="ChEBI" id="CHEBI:60344"/>
        <label>b566</label>
    </ligand>
    <ligandPart>
        <name>Fe</name>
        <dbReference type="ChEBI" id="CHEBI:18248"/>
    </ligandPart>
</feature>
<feature type="binding site" description="axial binding residue" evidence="2">
    <location>
        <position position="182"/>
    </location>
    <ligand>
        <name>heme b</name>
        <dbReference type="ChEBI" id="CHEBI:60344"/>
        <label>b562</label>
    </ligand>
    <ligandPart>
        <name>Fe</name>
        <dbReference type="ChEBI" id="CHEBI:18248"/>
    </ligandPart>
</feature>
<feature type="binding site" description="axial binding residue" evidence="2">
    <location>
        <position position="196"/>
    </location>
    <ligand>
        <name>heme b</name>
        <dbReference type="ChEBI" id="CHEBI:60344"/>
        <label>b566</label>
    </ligand>
    <ligandPart>
        <name>Fe</name>
        <dbReference type="ChEBI" id="CHEBI:18248"/>
    </ligandPart>
</feature>
<feature type="binding site" evidence="2">
    <location>
        <position position="201"/>
    </location>
    <ligand>
        <name>a ubiquinone</name>
        <dbReference type="ChEBI" id="CHEBI:16389"/>
    </ligand>
</feature>
<comment type="function">
    <text evidence="2">Component of the ubiquinol-cytochrome c reductase complex (complex III or cytochrome b-c1 complex) that is part of the mitochondrial respiratory chain. The b-c1 complex mediates electron transfer from ubiquinol to cytochrome c. Contributes to the generation of a proton gradient across the mitochondrial membrane that is then used for ATP synthesis.</text>
</comment>
<comment type="cofactor">
    <cofactor evidence="2">
        <name>heme b</name>
        <dbReference type="ChEBI" id="CHEBI:60344"/>
    </cofactor>
    <text evidence="2">Binds 2 heme b groups non-covalently.</text>
</comment>
<comment type="subunit">
    <text evidence="2">The cytochrome bc1 complex contains 11 subunits: 3 respiratory subunits (MT-CYB, CYC1 and UQCRFS1), 2 core proteins (UQCRC1 and UQCRC2) and 6 low-molecular weight proteins (UQCRH/QCR6, UQCRB/QCR7, UQCRQ/QCR8, UQCR10/QCR9, UQCR11/QCR10 and a cleavage product of UQCRFS1). This cytochrome bc1 complex then forms a dimer.</text>
</comment>
<comment type="subcellular location">
    <subcellularLocation>
        <location evidence="2">Mitochondrion inner membrane</location>
        <topology evidence="2">Multi-pass membrane protein</topology>
    </subcellularLocation>
</comment>
<comment type="miscellaneous">
    <text evidence="1">Heme 1 (or BL or b562) is low-potential and absorbs at about 562 nm, and heme 2 (or BH or b566) is high-potential and absorbs at about 566 nm.</text>
</comment>
<comment type="similarity">
    <text evidence="3 4">Belongs to the cytochrome b family.</text>
</comment>
<comment type="caution">
    <text evidence="2">The full-length protein contains only eight transmembrane helices, not nine as predicted by bioinformatics tools.</text>
</comment>
<accession>Q33800</accession>
<name>CYB_MURNA</name>
<keyword id="KW-0249">Electron transport</keyword>
<keyword id="KW-0349">Heme</keyword>
<keyword id="KW-0408">Iron</keyword>
<keyword id="KW-0472">Membrane</keyword>
<keyword id="KW-0479">Metal-binding</keyword>
<keyword id="KW-0496">Mitochondrion</keyword>
<keyword id="KW-0999">Mitochondrion inner membrane</keyword>
<keyword id="KW-0679">Respiratory chain</keyword>
<keyword id="KW-0812">Transmembrane</keyword>
<keyword id="KW-1133">Transmembrane helix</keyword>
<keyword id="KW-0813">Transport</keyword>
<keyword id="KW-0830">Ubiquinone</keyword>
<proteinExistence type="inferred from homology"/>